<dbReference type="EC" id="3.1.11.6" evidence="1"/>
<dbReference type="EMBL" id="AP008231">
    <property type="protein sequence ID" value="BAD79236.1"/>
    <property type="molecule type" value="Genomic_DNA"/>
</dbReference>
<dbReference type="RefSeq" id="WP_011243358.1">
    <property type="nucleotide sequence ID" value="NZ_CP085785.1"/>
</dbReference>
<dbReference type="SMR" id="Q5N384"/>
<dbReference type="GeneID" id="72429295"/>
<dbReference type="KEGG" id="syc:syc1046_c"/>
<dbReference type="eggNOG" id="COG1722">
    <property type="taxonomic scope" value="Bacteria"/>
</dbReference>
<dbReference type="Proteomes" id="UP000001175">
    <property type="component" value="Chromosome"/>
</dbReference>
<dbReference type="GO" id="GO:0005829">
    <property type="term" value="C:cytosol"/>
    <property type="evidence" value="ECO:0007669"/>
    <property type="project" value="TreeGrafter"/>
</dbReference>
<dbReference type="GO" id="GO:0009318">
    <property type="term" value="C:exodeoxyribonuclease VII complex"/>
    <property type="evidence" value="ECO:0007669"/>
    <property type="project" value="InterPro"/>
</dbReference>
<dbReference type="GO" id="GO:0008855">
    <property type="term" value="F:exodeoxyribonuclease VII activity"/>
    <property type="evidence" value="ECO:0007669"/>
    <property type="project" value="UniProtKB-UniRule"/>
</dbReference>
<dbReference type="GO" id="GO:0006308">
    <property type="term" value="P:DNA catabolic process"/>
    <property type="evidence" value="ECO:0007669"/>
    <property type="project" value="UniProtKB-UniRule"/>
</dbReference>
<dbReference type="Gene3D" id="1.10.287.1040">
    <property type="entry name" value="Exonuclease VII, small subunit"/>
    <property type="match status" value="1"/>
</dbReference>
<dbReference type="HAMAP" id="MF_00337">
    <property type="entry name" value="Exonuc_7_S"/>
    <property type="match status" value="1"/>
</dbReference>
<dbReference type="InterPro" id="IPR003761">
    <property type="entry name" value="Exonuc_VII_S"/>
</dbReference>
<dbReference type="InterPro" id="IPR037004">
    <property type="entry name" value="Exonuc_VII_ssu_sf"/>
</dbReference>
<dbReference type="NCBIfam" id="TIGR01280">
    <property type="entry name" value="xseB"/>
    <property type="match status" value="1"/>
</dbReference>
<dbReference type="PANTHER" id="PTHR34137">
    <property type="entry name" value="EXODEOXYRIBONUCLEASE 7 SMALL SUBUNIT"/>
    <property type="match status" value="1"/>
</dbReference>
<dbReference type="PANTHER" id="PTHR34137:SF1">
    <property type="entry name" value="EXODEOXYRIBONUCLEASE 7 SMALL SUBUNIT"/>
    <property type="match status" value="1"/>
</dbReference>
<dbReference type="Pfam" id="PF02609">
    <property type="entry name" value="Exonuc_VII_S"/>
    <property type="match status" value="1"/>
</dbReference>
<dbReference type="PIRSF" id="PIRSF006488">
    <property type="entry name" value="Exonuc_VII_S"/>
    <property type="match status" value="1"/>
</dbReference>
<dbReference type="SUPFAM" id="SSF116842">
    <property type="entry name" value="XseB-like"/>
    <property type="match status" value="1"/>
</dbReference>
<protein>
    <recommendedName>
        <fullName evidence="1">Exodeoxyribonuclease 7 small subunit</fullName>
        <ecNumber evidence="1">3.1.11.6</ecNumber>
    </recommendedName>
    <alternativeName>
        <fullName evidence="1">Exodeoxyribonuclease VII small subunit</fullName>
        <shortName evidence="1">Exonuclease VII small subunit</shortName>
    </alternativeName>
</protein>
<evidence type="ECO:0000255" key="1">
    <source>
        <dbReference type="HAMAP-Rule" id="MF_00337"/>
    </source>
</evidence>
<comment type="function">
    <text evidence="1">Bidirectionally degrades single-stranded DNA into large acid-insoluble oligonucleotides, which are then degraded further into small acid-soluble oligonucleotides.</text>
</comment>
<comment type="catalytic activity">
    <reaction evidence="1">
        <text>Exonucleolytic cleavage in either 5'- to 3'- or 3'- to 5'-direction to yield nucleoside 5'-phosphates.</text>
        <dbReference type="EC" id="3.1.11.6"/>
    </reaction>
</comment>
<comment type="subunit">
    <text evidence="1">Heterooligomer composed of large and small subunits.</text>
</comment>
<comment type="subcellular location">
    <subcellularLocation>
        <location evidence="1">Cytoplasm</location>
    </subcellularLocation>
</comment>
<comment type="similarity">
    <text evidence="1">Belongs to the XseB family.</text>
</comment>
<organism>
    <name type="scientific">Synechococcus sp. (strain ATCC 27144 / PCC 6301 / SAUG 1402/1)</name>
    <name type="common">Anacystis nidulans</name>
    <dbReference type="NCBI Taxonomy" id="269084"/>
    <lineage>
        <taxon>Bacteria</taxon>
        <taxon>Bacillati</taxon>
        <taxon>Cyanobacteriota</taxon>
        <taxon>Cyanophyceae</taxon>
        <taxon>Synechococcales</taxon>
        <taxon>Synechococcaceae</taxon>
        <taxon>Synechococcus</taxon>
    </lineage>
</organism>
<reference key="1">
    <citation type="journal article" date="2007" name="Photosyn. Res.">
        <title>Complete nucleotide sequence of the freshwater unicellular cyanobacterium Synechococcus elongatus PCC 6301 chromosome: gene content and organization.</title>
        <authorList>
            <person name="Sugita C."/>
            <person name="Ogata K."/>
            <person name="Shikata M."/>
            <person name="Jikuya H."/>
            <person name="Takano J."/>
            <person name="Furumichi M."/>
            <person name="Kanehisa M."/>
            <person name="Omata T."/>
            <person name="Sugiura M."/>
            <person name="Sugita M."/>
        </authorList>
    </citation>
    <scope>NUCLEOTIDE SEQUENCE [LARGE SCALE GENOMIC DNA]</scope>
    <source>
        <strain>ATCC 27144 / PCC 6301 / SAUG 1402/1</strain>
    </source>
</reference>
<keyword id="KW-0963">Cytoplasm</keyword>
<keyword id="KW-0269">Exonuclease</keyword>
<keyword id="KW-0378">Hydrolase</keyword>
<keyword id="KW-0540">Nuclease</keyword>
<sequence length="74" mass="8421">MAKAKPAWSYETAIAEVEQIVQQLESGELPLAEVVEQFQQASQRLQQCDRFLRDKQAELDLLIESLDEPPVPPQ</sequence>
<accession>Q5N384</accession>
<gene>
    <name evidence="1" type="primary">xseB</name>
    <name type="ordered locus">syc1046_c</name>
</gene>
<feature type="chain" id="PRO_0000207025" description="Exodeoxyribonuclease 7 small subunit">
    <location>
        <begin position="1"/>
        <end position="74"/>
    </location>
</feature>
<proteinExistence type="inferred from homology"/>
<name>EX7S_SYNP6</name>